<accession>B7M1P6</accession>
<organism>
    <name type="scientific">Escherichia coli O8 (strain IAI1)</name>
    <dbReference type="NCBI Taxonomy" id="585034"/>
    <lineage>
        <taxon>Bacteria</taxon>
        <taxon>Pseudomonadati</taxon>
        <taxon>Pseudomonadota</taxon>
        <taxon>Gammaproteobacteria</taxon>
        <taxon>Enterobacterales</taxon>
        <taxon>Enterobacteriaceae</taxon>
        <taxon>Escherichia</taxon>
    </lineage>
</organism>
<sequence>MRFAIVVTGPAYGTQQASSAFQFAQALIVEGHELSSVFFYREGVYNANQLTSPASDEFDLVRGWQQLNAQHGVALNICVAAALRRGIVDETEAGRLGLASSNLQPGFTLSGLGALAEASLTCDRVVQF</sequence>
<evidence type="ECO:0000255" key="1">
    <source>
        <dbReference type="HAMAP-Rule" id="MF_00390"/>
    </source>
</evidence>
<feature type="chain" id="PRO_1000122859" description="Sulfurtransferase TusD">
    <location>
        <begin position="1"/>
        <end position="128"/>
    </location>
</feature>
<feature type="active site" description="Cysteine persulfide intermediate" evidence="1">
    <location>
        <position position="78"/>
    </location>
</feature>
<gene>
    <name evidence="1" type="primary">tusD</name>
    <name type="ordered locus">ECIAI1_3481</name>
</gene>
<proteinExistence type="inferred from homology"/>
<protein>
    <recommendedName>
        <fullName evidence="1">Sulfurtransferase TusD</fullName>
        <ecNumber evidence="1">2.8.1.-</ecNumber>
    </recommendedName>
    <alternativeName>
        <fullName evidence="1">tRNA 2-thiouridine synthesizing protein D</fullName>
    </alternativeName>
</protein>
<reference key="1">
    <citation type="journal article" date="2009" name="PLoS Genet.">
        <title>Organised genome dynamics in the Escherichia coli species results in highly diverse adaptive paths.</title>
        <authorList>
            <person name="Touchon M."/>
            <person name="Hoede C."/>
            <person name="Tenaillon O."/>
            <person name="Barbe V."/>
            <person name="Baeriswyl S."/>
            <person name="Bidet P."/>
            <person name="Bingen E."/>
            <person name="Bonacorsi S."/>
            <person name="Bouchier C."/>
            <person name="Bouvet O."/>
            <person name="Calteau A."/>
            <person name="Chiapello H."/>
            <person name="Clermont O."/>
            <person name="Cruveiller S."/>
            <person name="Danchin A."/>
            <person name="Diard M."/>
            <person name="Dossat C."/>
            <person name="Karoui M.E."/>
            <person name="Frapy E."/>
            <person name="Garry L."/>
            <person name="Ghigo J.M."/>
            <person name="Gilles A.M."/>
            <person name="Johnson J."/>
            <person name="Le Bouguenec C."/>
            <person name="Lescat M."/>
            <person name="Mangenot S."/>
            <person name="Martinez-Jehanne V."/>
            <person name="Matic I."/>
            <person name="Nassif X."/>
            <person name="Oztas S."/>
            <person name="Petit M.A."/>
            <person name="Pichon C."/>
            <person name="Rouy Z."/>
            <person name="Ruf C.S."/>
            <person name="Schneider D."/>
            <person name="Tourret J."/>
            <person name="Vacherie B."/>
            <person name="Vallenet D."/>
            <person name="Medigue C."/>
            <person name="Rocha E.P.C."/>
            <person name="Denamur E."/>
        </authorList>
    </citation>
    <scope>NUCLEOTIDE SEQUENCE [LARGE SCALE GENOMIC DNA]</scope>
    <source>
        <strain>IAI1</strain>
    </source>
</reference>
<keyword id="KW-0963">Cytoplasm</keyword>
<keyword id="KW-0808">Transferase</keyword>
<keyword id="KW-0819">tRNA processing</keyword>
<name>TUSD_ECO8A</name>
<comment type="function">
    <text evidence="1">Part of a sulfur-relay system required for 2-thiolation of 5-methylaminomethyl-2-thiouridine (mnm(5)s(2)U) at tRNA wobble positions. Accepts sulfur from TusA and transfers it in turn to TusE.</text>
</comment>
<comment type="subunit">
    <text evidence="1">Heterohexamer, formed by a dimer of trimers. The hexameric TusBCD complex contains 2 copies each of TusB, TusC and TusD. The TusBCD complex interacts with TusE.</text>
</comment>
<comment type="subcellular location">
    <subcellularLocation>
        <location evidence="1">Cytoplasm</location>
    </subcellularLocation>
</comment>
<comment type="similarity">
    <text evidence="1">Belongs to the DsrE/TusD family.</text>
</comment>
<dbReference type="EC" id="2.8.1.-" evidence="1"/>
<dbReference type="EMBL" id="CU928160">
    <property type="protein sequence ID" value="CAR00283.1"/>
    <property type="molecule type" value="Genomic_DNA"/>
</dbReference>
<dbReference type="RefSeq" id="WP_001209710.1">
    <property type="nucleotide sequence ID" value="NC_011741.1"/>
</dbReference>
<dbReference type="SMR" id="B7M1P6"/>
<dbReference type="GeneID" id="75206288"/>
<dbReference type="KEGG" id="ecr:ECIAI1_3481"/>
<dbReference type="HOGENOM" id="CLU_132095_0_0_6"/>
<dbReference type="GO" id="GO:1990228">
    <property type="term" value="C:sulfurtransferase complex"/>
    <property type="evidence" value="ECO:0007669"/>
    <property type="project" value="TreeGrafter"/>
</dbReference>
<dbReference type="GO" id="GO:0097163">
    <property type="term" value="F:sulfur carrier activity"/>
    <property type="evidence" value="ECO:0007669"/>
    <property type="project" value="TreeGrafter"/>
</dbReference>
<dbReference type="GO" id="GO:0016783">
    <property type="term" value="F:sulfurtransferase activity"/>
    <property type="evidence" value="ECO:0007669"/>
    <property type="project" value="UniProtKB-UniRule"/>
</dbReference>
<dbReference type="GO" id="GO:0002143">
    <property type="term" value="P:tRNA wobble position uridine thiolation"/>
    <property type="evidence" value="ECO:0007669"/>
    <property type="project" value="TreeGrafter"/>
</dbReference>
<dbReference type="FunFam" id="3.40.1260.10:FF:000001">
    <property type="entry name" value="Sulfurtransferase TusD"/>
    <property type="match status" value="1"/>
</dbReference>
<dbReference type="Gene3D" id="3.40.1260.10">
    <property type="entry name" value="DsrEFH-like"/>
    <property type="match status" value="1"/>
</dbReference>
<dbReference type="HAMAP" id="MF_00390">
    <property type="entry name" value="Thiourid_synth_D"/>
    <property type="match status" value="1"/>
</dbReference>
<dbReference type="InterPro" id="IPR027396">
    <property type="entry name" value="DsrEFH-like"/>
</dbReference>
<dbReference type="InterPro" id="IPR003787">
    <property type="entry name" value="Sulphur_relay_DsrE/F-like"/>
</dbReference>
<dbReference type="InterPro" id="IPR017463">
    <property type="entry name" value="Sulphur_relay_TusD/DsrE"/>
</dbReference>
<dbReference type="NCBIfam" id="NF001237">
    <property type="entry name" value="PRK00207.1"/>
    <property type="match status" value="1"/>
</dbReference>
<dbReference type="NCBIfam" id="TIGR03012">
    <property type="entry name" value="sulf_tusD_dsrE"/>
    <property type="match status" value="1"/>
</dbReference>
<dbReference type="PANTHER" id="PTHR34874">
    <property type="entry name" value="PROTEIN YCHN"/>
    <property type="match status" value="1"/>
</dbReference>
<dbReference type="PANTHER" id="PTHR34874:SF3">
    <property type="entry name" value="SULFURTRANSFERASE TUSD"/>
    <property type="match status" value="1"/>
</dbReference>
<dbReference type="Pfam" id="PF02635">
    <property type="entry name" value="DsrE"/>
    <property type="match status" value="1"/>
</dbReference>
<dbReference type="SUPFAM" id="SSF75169">
    <property type="entry name" value="DsrEFH-like"/>
    <property type="match status" value="1"/>
</dbReference>